<name>RS13_MYCMM</name>
<keyword id="KW-1185">Reference proteome</keyword>
<keyword id="KW-0687">Ribonucleoprotein</keyword>
<keyword id="KW-0689">Ribosomal protein</keyword>
<keyword id="KW-0694">RNA-binding</keyword>
<keyword id="KW-0699">rRNA-binding</keyword>
<keyword id="KW-0820">tRNA-binding</keyword>
<comment type="function">
    <text evidence="1">Located at the top of the head of the 30S subunit, it contacts several helices of the 16S rRNA. In the 70S ribosome it contacts the 23S rRNA (bridge B1a) and protein L5 of the 50S subunit (bridge B1b), connecting the 2 subunits; these bridges are implicated in subunit movement. Contacts the tRNAs in the A and P-sites.</text>
</comment>
<comment type="subunit">
    <text evidence="1">Part of the 30S ribosomal subunit. Forms a loose heterodimer with protein S19. Forms two bridges to the 50S subunit in the 70S ribosome.</text>
</comment>
<comment type="similarity">
    <text evidence="1">Belongs to the universal ribosomal protein uS13 family.</text>
</comment>
<gene>
    <name evidence="1" type="primary">rpsM</name>
    <name type="ordered locus">MMAR_1087</name>
</gene>
<organism>
    <name type="scientific">Mycobacterium marinum (strain ATCC BAA-535 / M)</name>
    <dbReference type="NCBI Taxonomy" id="216594"/>
    <lineage>
        <taxon>Bacteria</taxon>
        <taxon>Bacillati</taxon>
        <taxon>Actinomycetota</taxon>
        <taxon>Actinomycetes</taxon>
        <taxon>Mycobacteriales</taxon>
        <taxon>Mycobacteriaceae</taxon>
        <taxon>Mycobacterium</taxon>
        <taxon>Mycobacterium ulcerans group</taxon>
    </lineage>
</organism>
<sequence>MARLVGVDLPRDKRMEIALTYIYGVGRTRSNEILAATGIDRNLRTRDLTDDQLTHLRDYIEANLKIEGDLRREVQADIRRKIEIGCYQGLRHRRGLPVRGQRTKTNARTRKGPKRTIAGKKKAR</sequence>
<dbReference type="EMBL" id="CP000854">
    <property type="protein sequence ID" value="ACC39543.1"/>
    <property type="molecule type" value="Genomic_DNA"/>
</dbReference>
<dbReference type="RefSeq" id="WP_011739106.1">
    <property type="nucleotide sequence ID" value="NC_010612.1"/>
</dbReference>
<dbReference type="SMR" id="B2HCX1"/>
<dbReference type="STRING" id="216594.MMAR_1087"/>
<dbReference type="GeneID" id="34344064"/>
<dbReference type="GeneID" id="93438545"/>
<dbReference type="KEGG" id="mmi:MMAR_1087"/>
<dbReference type="eggNOG" id="COG0099">
    <property type="taxonomic scope" value="Bacteria"/>
</dbReference>
<dbReference type="HOGENOM" id="CLU_103849_1_2_11"/>
<dbReference type="OrthoDB" id="9803610at2"/>
<dbReference type="Proteomes" id="UP000001190">
    <property type="component" value="Chromosome"/>
</dbReference>
<dbReference type="GO" id="GO:0005829">
    <property type="term" value="C:cytosol"/>
    <property type="evidence" value="ECO:0007669"/>
    <property type="project" value="TreeGrafter"/>
</dbReference>
<dbReference type="GO" id="GO:0015935">
    <property type="term" value="C:small ribosomal subunit"/>
    <property type="evidence" value="ECO:0007669"/>
    <property type="project" value="TreeGrafter"/>
</dbReference>
<dbReference type="GO" id="GO:0019843">
    <property type="term" value="F:rRNA binding"/>
    <property type="evidence" value="ECO:0007669"/>
    <property type="project" value="UniProtKB-UniRule"/>
</dbReference>
<dbReference type="GO" id="GO:0003735">
    <property type="term" value="F:structural constituent of ribosome"/>
    <property type="evidence" value="ECO:0007669"/>
    <property type="project" value="InterPro"/>
</dbReference>
<dbReference type="GO" id="GO:0000049">
    <property type="term" value="F:tRNA binding"/>
    <property type="evidence" value="ECO:0007669"/>
    <property type="project" value="UniProtKB-UniRule"/>
</dbReference>
<dbReference type="GO" id="GO:0006412">
    <property type="term" value="P:translation"/>
    <property type="evidence" value="ECO:0007669"/>
    <property type="project" value="UniProtKB-UniRule"/>
</dbReference>
<dbReference type="FunFam" id="1.10.8.50:FF:000001">
    <property type="entry name" value="30S ribosomal protein S13"/>
    <property type="match status" value="1"/>
</dbReference>
<dbReference type="FunFam" id="4.10.910.10:FF:000001">
    <property type="entry name" value="30S ribosomal protein S13"/>
    <property type="match status" value="1"/>
</dbReference>
<dbReference type="Gene3D" id="1.10.8.50">
    <property type="match status" value="1"/>
</dbReference>
<dbReference type="Gene3D" id="4.10.910.10">
    <property type="entry name" value="30s ribosomal protein s13, domain 2"/>
    <property type="match status" value="1"/>
</dbReference>
<dbReference type="HAMAP" id="MF_01315">
    <property type="entry name" value="Ribosomal_uS13"/>
    <property type="match status" value="1"/>
</dbReference>
<dbReference type="InterPro" id="IPR027437">
    <property type="entry name" value="Rbsml_uS13_C"/>
</dbReference>
<dbReference type="InterPro" id="IPR001892">
    <property type="entry name" value="Ribosomal_uS13"/>
</dbReference>
<dbReference type="InterPro" id="IPR010979">
    <property type="entry name" value="Ribosomal_uS13-like_H2TH"/>
</dbReference>
<dbReference type="InterPro" id="IPR019980">
    <property type="entry name" value="Ribosomal_uS13_bac-type"/>
</dbReference>
<dbReference type="InterPro" id="IPR018269">
    <property type="entry name" value="Ribosomal_uS13_CS"/>
</dbReference>
<dbReference type="NCBIfam" id="TIGR03631">
    <property type="entry name" value="uS13_bact"/>
    <property type="match status" value="1"/>
</dbReference>
<dbReference type="PANTHER" id="PTHR10871">
    <property type="entry name" value="30S RIBOSOMAL PROTEIN S13/40S RIBOSOMAL PROTEIN S18"/>
    <property type="match status" value="1"/>
</dbReference>
<dbReference type="PANTHER" id="PTHR10871:SF1">
    <property type="entry name" value="SMALL RIBOSOMAL SUBUNIT PROTEIN US13M"/>
    <property type="match status" value="1"/>
</dbReference>
<dbReference type="Pfam" id="PF00416">
    <property type="entry name" value="Ribosomal_S13"/>
    <property type="match status" value="1"/>
</dbReference>
<dbReference type="PIRSF" id="PIRSF002134">
    <property type="entry name" value="Ribosomal_S13"/>
    <property type="match status" value="1"/>
</dbReference>
<dbReference type="SUPFAM" id="SSF46946">
    <property type="entry name" value="S13-like H2TH domain"/>
    <property type="match status" value="1"/>
</dbReference>
<dbReference type="PROSITE" id="PS00646">
    <property type="entry name" value="RIBOSOMAL_S13_1"/>
    <property type="match status" value="1"/>
</dbReference>
<dbReference type="PROSITE" id="PS50159">
    <property type="entry name" value="RIBOSOMAL_S13_2"/>
    <property type="match status" value="1"/>
</dbReference>
<feature type="chain" id="PRO_1000141292" description="Small ribosomal subunit protein uS13">
    <location>
        <begin position="1"/>
        <end position="124"/>
    </location>
</feature>
<feature type="region of interest" description="Disordered" evidence="2">
    <location>
        <begin position="95"/>
        <end position="124"/>
    </location>
</feature>
<proteinExistence type="inferred from homology"/>
<evidence type="ECO:0000255" key="1">
    <source>
        <dbReference type="HAMAP-Rule" id="MF_01315"/>
    </source>
</evidence>
<evidence type="ECO:0000256" key="2">
    <source>
        <dbReference type="SAM" id="MobiDB-lite"/>
    </source>
</evidence>
<evidence type="ECO:0000305" key="3"/>
<accession>B2HCX1</accession>
<protein>
    <recommendedName>
        <fullName evidence="1">Small ribosomal subunit protein uS13</fullName>
    </recommendedName>
    <alternativeName>
        <fullName evidence="3">30S ribosomal protein S13</fullName>
    </alternativeName>
</protein>
<reference key="1">
    <citation type="journal article" date="2008" name="Genome Res.">
        <title>Insights from the complete genome sequence of Mycobacterium marinum on the evolution of Mycobacterium tuberculosis.</title>
        <authorList>
            <person name="Stinear T.P."/>
            <person name="Seemann T."/>
            <person name="Harrison P.F."/>
            <person name="Jenkin G.A."/>
            <person name="Davies J.K."/>
            <person name="Johnson P.D."/>
            <person name="Abdellah Z."/>
            <person name="Arrowsmith C."/>
            <person name="Chillingworth T."/>
            <person name="Churcher C."/>
            <person name="Clarke K."/>
            <person name="Cronin A."/>
            <person name="Davis P."/>
            <person name="Goodhead I."/>
            <person name="Holroyd N."/>
            <person name="Jagels K."/>
            <person name="Lord A."/>
            <person name="Moule S."/>
            <person name="Mungall K."/>
            <person name="Norbertczak H."/>
            <person name="Quail M.A."/>
            <person name="Rabbinowitsch E."/>
            <person name="Walker D."/>
            <person name="White B."/>
            <person name="Whitehead S."/>
            <person name="Small P.L."/>
            <person name="Brosch R."/>
            <person name="Ramakrishnan L."/>
            <person name="Fischbach M.A."/>
            <person name="Parkhill J."/>
            <person name="Cole S.T."/>
        </authorList>
    </citation>
    <scope>NUCLEOTIDE SEQUENCE [LARGE SCALE GENOMIC DNA]</scope>
    <source>
        <strain>ATCC BAA-535 / M</strain>
    </source>
</reference>